<dbReference type="EMBL" id="AF202257">
    <property type="protein sequence ID" value="AAF08978.3"/>
    <property type="molecule type" value="mRNA"/>
</dbReference>
<dbReference type="EMBL" id="BT006997">
    <property type="protein sequence ID" value="AAP35643.1"/>
    <property type="molecule type" value="mRNA"/>
</dbReference>
<dbReference type="EMBL" id="AL080276">
    <property type="status" value="NOT_ANNOTATED_CDS"/>
    <property type="molecule type" value="Genomic_DNA"/>
</dbReference>
<dbReference type="EMBL" id="BC013117">
    <property type="protein sequence ID" value="AAH13117.1"/>
    <property type="molecule type" value="mRNA"/>
</dbReference>
<dbReference type="EMBL" id="AF493938">
    <property type="protein sequence ID" value="AAM12652.1"/>
    <property type="molecule type" value="mRNA"/>
</dbReference>
<dbReference type="CCDS" id="CCDS5244.1"/>
<dbReference type="RefSeq" id="NP_036551.3">
    <property type="nucleotide sequence ID" value="NM_012419.4"/>
</dbReference>
<dbReference type="RefSeq" id="XP_047274592.1">
    <property type="nucleotide sequence ID" value="XM_047418636.1"/>
</dbReference>
<dbReference type="RefSeq" id="XP_054211131.1">
    <property type="nucleotide sequence ID" value="XM_054355156.1"/>
</dbReference>
<dbReference type="PDB" id="1ZV4">
    <property type="method" value="X-ray"/>
    <property type="resolution" value="2.40 A"/>
    <property type="chains" value="X=72-206"/>
</dbReference>
<dbReference type="PDB" id="6AM3">
    <property type="method" value="X-ray"/>
    <property type="resolution" value="1.53 A"/>
    <property type="chains" value="A/X=72-206"/>
</dbReference>
<dbReference type="PDBsum" id="1ZV4"/>
<dbReference type="PDBsum" id="6AM3"/>
<dbReference type="SMR" id="Q9UGC6"/>
<dbReference type="BioGRID" id="117744">
    <property type="interactions" value="48"/>
</dbReference>
<dbReference type="DIP" id="DIP-59095N"/>
<dbReference type="FunCoup" id="Q9UGC6">
    <property type="interactions" value="1017"/>
</dbReference>
<dbReference type="IntAct" id="Q9UGC6">
    <property type="interactions" value="45"/>
</dbReference>
<dbReference type="STRING" id="9606.ENSP00000206262"/>
<dbReference type="BindingDB" id="Q9UGC6"/>
<dbReference type="ChEMBL" id="CHEMBL4295974"/>
<dbReference type="GuidetoPHARMACOLOGY" id="2801"/>
<dbReference type="iPTMnet" id="Q9UGC6"/>
<dbReference type="PhosphoSitePlus" id="Q9UGC6"/>
<dbReference type="SwissPalm" id="Q9UGC6"/>
<dbReference type="BioMuta" id="RGS17"/>
<dbReference type="DMDM" id="15214238"/>
<dbReference type="jPOST" id="Q9UGC6"/>
<dbReference type="MassIVE" id="Q9UGC6"/>
<dbReference type="PaxDb" id="9606-ENSP00000356194"/>
<dbReference type="PeptideAtlas" id="Q9UGC6"/>
<dbReference type="ProteomicsDB" id="84206"/>
<dbReference type="Antibodypedia" id="33390">
    <property type="antibodies" value="178 antibodies from 30 providers"/>
</dbReference>
<dbReference type="DNASU" id="26575"/>
<dbReference type="Ensembl" id="ENST00000206262.2">
    <property type="protein sequence ID" value="ENSP00000206262.1"/>
    <property type="gene ID" value="ENSG00000091844.8"/>
</dbReference>
<dbReference type="Ensembl" id="ENST00000367225.6">
    <property type="protein sequence ID" value="ENSP00000356194.1"/>
    <property type="gene ID" value="ENSG00000091844.8"/>
</dbReference>
<dbReference type="GeneID" id="26575"/>
<dbReference type="KEGG" id="hsa:26575"/>
<dbReference type="MANE-Select" id="ENST00000206262.2">
    <property type="protein sequence ID" value="ENSP00000206262.1"/>
    <property type="RefSeq nucleotide sequence ID" value="NM_012419.5"/>
    <property type="RefSeq protein sequence ID" value="NP_036551.3"/>
</dbReference>
<dbReference type="UCSC" id="uc003qpm.4">
    <property type="organism name" value="human"/>
</dbReference>
<dbReference type="AGR" id="HGNC:14088"/>
<dbReference type="CTD" id="26575"/>
<dbReference type="DisGeNET" id="26575"/>
<dbReference type="GeneCards" id="RGS17"/>
<dbReference type="HGNC" id="HGNC:14088">
    <property type="gene designation" value="RGS17"/>
</dbReference>
<dbReference type="HPA" id="ENSG00000091844">
    <property type="expression patterns" value="Tissue enhanced (brain)"/>
</dbReference>
<dbReference type="MIM" id="607191">
    <property type="type" value="gene"/>
</dbReference>
<dbReference type="neXtProt" id="NX_Q9UGC6"/>
<dbReference type="OpenTargets" id="ENSG00000091844"/>
<dbReference type="PharmGKB" id="PA34368"/>
<dbReference type="VEuPathDB" id="HostDB:ENSG00000091844"/>
<dbReference type="eggNOG" id="KOG3589">
    <property type="taxonomic scope" value="Eukaryota"/>
</dbReference>
<dbReference type="GeneTree" id="ENSGT00940000155393"/>
<dbReference type="HOGENOM" id="CLU_059863_0_2_1"/>
<dbReference type="InParanoid" id="Q9UGC6"/>
<dbReference type="OMA" id="MQDNSNA"/>
<dbReference type="OrthoDB" id="10266999at2759"/>
<dbReference type="PAN-GO" id="Q9UGC6">
    <property type="GO annotations" value="0 GO annotations based on evolutionary models"/>
</dbReference>
<dbReference type="PhylomeDB" id="Q9UGC6"/>
<dbReference type="TreeFam" id="TF315837"/>
<dbReference type="PathwayCommons" id="Q9UGC6"/>
<dbReference type="Reactome" id="R-HSA-416476">
    <property type="pathway name" value="G alpha (q) signalling events"/>
</dbReference>
<dbReference type="Reactome" id="R-HSA-418594">
    <property type="pathway name" value="G alpha (i) signalling events"/>
</dbReference>
<dbReference type="Reactome" id="R-HSA-418597">
    <property type="pathway name" value="G alpha (z) signalling events"/>
</dbReference>
<dbReference type="SignaLink" id="Q9UGC6"/>
<dbReference type="BioGRID-ORCS" id="26575">
    <property type="hits" value="7 hits in 1142 CRISPR screens"/>
</dbReference>
<dbReference type="ChiTaRS" id="RGS17">
    <property type="organism name" value="human"/>
</dbReference>
<dbReference type="EvolutionaryTrace" id="Q9UGC6"/>
<dbReference type="GeneWiki" id="RGS17"/>
<dbReference type="GenomeRNAi" id="26575"/>
<dbReference type="Pharos" id="Q9UGC6">
    <property type="development level" value="Tchem"/>
</dbReference>
<dbReference type="PRO" id="PR:Q9UGC6"/>
<dbReference type="Proteomes" id="UP000005640">
    <property type="component" value="Chromosome 6"/>
</dbReference>
<dbReference type="RNAct" id="Q9UGC6">
    <property type="molecule type" value="protein"/>
</dbReference>
<dbReference type="Bgee" id="ENSG00000091844">
    <property type="expression patterns" value="Expressed in cortical plate and 164 other cell types or tissues"/>
</dbReference>
<dbReference type="GO" id="GO:0005737">
    <property type="term" value="C:cytoplasm"/>
    <property type="evidence" value="ECO:0007669"/>
    <property type="project" value="UniProtKB-SubCell"/>
</dbReference>
<dbReference type="GO" id="GO:0043005">
    <property type="term" value="C:neuron projection"/>
    <property type="evidence" value="ECO:0007669"/>
    <property type="project" value="UniProtKB-KW"/>
</dbReference>
<dbReference type="GO" id="GO:0005634">
    <property type="term" value="C:nucleus"/>
    <property type="evidence" value="ECO:0007669"/>
    <property type="project" value="UniProtKB-SubCell"/>
</dbReference>
<dbReference type="GO" id="GO:0005886">
    <property type="term" value="C:plasma membrane"/>
    <property type="evidence" value="ECO:0000304"/>
    <property type="project" value="Reactome"/>
</dbReference>
<dbReference type="GO" id="GO:0045202">
    <property type="term" value="C:synapse"/>
    <property type="evidence" value="ECO:0007669"/>
    <property type="project" value="UniProtKB-SubCell"/>
</dbReference>
<dbReference type="GO" id="GO:0005096">
    <property type="term" value="F:GTPase activator activity"/>
    <property type="evidence" value="ECO:0007669"/>
    <property type="project" value="UniProtKB-KW"/>
</dbReference>
<dbReference type="GO" id="GO:0003924">
    <property type="term" value="F:GTPase activity"/>
    <property type="evidence" value="ECO:0000304"/>
    <property type="project" value="Reactome"/>
</dbReference>
<dbReference type="GO" id="GO:0007186">
    <property type="term" value="P:G protein-coupled receptor signaling pathway"/>
    <property type="evidence" value="ECO:0000304"/>
    <property type="project" value="Reactome"/>
</dbReference>
<dbReference type="GO" id="GO:0009968">
    <property type="term" value="P:negative regulation of signal transduction"/>
    <property type="evidence" value="ECO:0007669"/>
    <property type="project" value="UniProtKB-KW"/>
</dbReference>
<dbReference type="GO" id="GO:0001975">
    <property type="term" value="P:response to amphetamine"/>
    <property type="evidence" value="ECO:0007669"/>
    <property type="project" value="Ensembl"/>
</dbReference>
<dbReference type="FunFam" id="1.10.167.10:FF:000015">
    <property type="entry name" value="Regulator of G-protein signaling 17"/>
    <property type="match status" value="1"/>
</dbReference>
<dbReference type="Gene3D" id="1.10.167.10">
    <property type="entry name" value="Regulator of G-protein Signalling 4, domain 2"/>
    <property type="match status" value="1"/>
</dbReference>
<dbReference type="InterPro" id="IPR016137">
    <property type="entry name" value="RGS"/>
</dbReference>
<dbReference type="InterPro" id="IPR036305">
    <property type="entry name" value="RGS_sf"/>
</dbReference>
<dbReference type="InterPro" id="IPR044926">
    <property type="entry name" value="RGS_subdomain_2"/>
</dbReference>
<dbReference type="PANTHER" id="PTHR10845">
    <property type="entry name" value="REGULATOR OF G PROTEIN SIGNALING"/>
    <property type="match status" value="1"/>
</dbReference>
<dbReference type="PANTHER" id="PTHR10845:SF196">
    <property type="entry name" value="REGULATOR OF G-PROTEIN SIGNALING 17"/>
    <property type="match status" value="1"/>
</dbReference>
<dbReference type="Pfam" id="PF00615">
    <property type="entry name" value="RGS"/>
    <property type="match status" value="1"/>
</dbReference>
<dbReference type="PRINTS" id="PR01301">
    <property type="entry name" value="RGSPROTEIN"/>
</dbReference>
<dbReference type="SMART" id="SM00315">
    <property type="entry name" value="RGS"/>
    <property type="match status" value="1"/>
</dbReference>
<dbReference type="SUPFAM" id="SSF48097">
    <property type="entry name" value="Regulator of G-protein signaling, RGS"/>
    <property type="match status" value="1"/>
</dbReference>
<dbReference type="PROSITE" id="PS50132">
    <property type="entry name" value="RGS"/>
    <property type="match status" value="1"/>
</dbReference>
<keyword id="KW-0002">3D-structure</keyword>
<keyword id="KW-0963">Cytoplasm</keyword>
<keyword id="KW-0325">Glycoprotein</keyword>
<keyword id="KW-0343">GTPase activation</keyword>
<keyword id="KW-0472">Membrane</keyword>
<keyword id="KW-0539">Nucleus</keyword>
<keyword id="KW-0597">Phosphoprotein</keyword>
<keyword id="KW-1267">Proteomics identification</keyword>
<keyword id="KW-1185">Reference proteome</keyword>
<keyword id="KW-0734">Signal transduction inhibitor</keyword>
<keyword id="KW-0770">Synapse</keyword>
<keyword id="KW-0771">Synaptosome</keyword>
<keyword id="KW-0832">Ubl conjugation</keyword>
<reference key="1">
    <citation type="submission" date="2002-12" db="EMBL/GenBank/DDBJ databases">
        <authorList>
            <person name="Ghahremani M.H."/>
            <person name="Daigle M."/>
            <person name="Albert P.R."/>
        </authorList>
    </citation>
    <scope>NUCLEOTIDE SEQUENCE [MRNA]</scope>
    <source>
        <tissue>Brain</tissue>
    </source>
</reference>
<reference key="2">
    <citation type="submission" date="2003-05" db="EMBL/GenBank/DDBJ databases">
        <title>Cloning of human full-length CDSs in BD Creator(TM) system donor vector.</title>
        <authorList>
            <person name="Kalnine N."/>
            <person name="Chen X."/>
            <person name="Rolfs A."/>
            <person name="Halleck A."/>
            <person name="Hines L."/>
            <person name="Eisenstein S."/>
            <person name="Koundinya M."/>
            <person name="Raphael J."/>
            <person name="Moreira D."/>
            <person name="Kelley T."/>
            <person name="LaBaer J."/>
            <person name="Lin Y."/>
            <person name="Phelan M."/>
            <person name="Farmer A."/>
        </authorList>
    </citation>
    <scope>NUCLEOTIDE SEQUENCE [LARGE SCALE MRNA]</scope>
</reference>
<reference key="3">
    <citation type="journal article" date="2003" name="Nature">
        <title>The DNA sequence and analysis of human chromosome 6.</title>
        <authorList>
            <person name="Mungall A.J."/>
            <person name="Palmer S.A."/>
            <person name="Sims S.K."/>
            <person name="Edwards C.A."/>
            <person name="Ashurst J.L."/>
            <person name="Wilming L."/>
            <person name="Jones M.C."/>
            <person name="Horton R."/>
            <person name="Hunt S.E."/>
            <person name="Scott C.E."/>
            <person name="Gilbert J.G.R."/>
            <person name="Clamp M.E."/>
            <person name="Bethel G."/>
            <person name="Milne S."/>
            <person name="Ainscough R."/>
            <person name="Almeida J.P."/>
            <person name="Ambrose K.D."/>
            <person name="Andrews T.D."/>
            <person name="Ashwell R.I.S."/>
            <person name="Babbage A.K."/>
            <person name="Bagguley C.L."/>
            <person name="Bailey J."/>
            <person name="Banerjee R."/>
            <person name="Barker D.J."/>
            <person name="Barlow K.F."/>
            <person name="Bates K."/>
            <person name="Beare D.M."/>
            <person name="Beasley H."/>
            <person name="Beasley O."/>
            <person name="Bird C.P."/>
            <person name="Blakey S.E."/>
            <person name="Bray-Allen S."/>
            <person name="Brook J."/>
            <person name="Brown A.J."/>
            <person name="Brown J.Y."/>
            <person name="Burford D.C."/>
            <person name="Burrill W."/>
            <person name="Burton J."/>
            <person name="Carder C."/>
            <person name="Carter N.P."/>
            <person name="Chapman J.C."/>
            <person name="Clark S.Y."/>
            <person name="Clark G."/>
            <person name="Clee C.M."/>
            <person name="Clegg S."/>
            <person name="Cobley V."/>
            <person name="Collier R.E."/>
            <person name="Collins J.E."/>
            <person name="Colman L.K."/>
            <person name="Corby N.R."/>
            <person name="Coville G.J."/>
            <person name="Culley K.M."/>
            <person name="Dhami P."/>
            <person name="Davies J."/>
            <person name="Dunn M."/>
            <person name="Earthrowl M.E."/>
            <person name="Ellington A.E."/>
            <person name="Evans K.A."/>
            <person name="Faulkner L."/>
            <person name="Francis M.D."/>
            <person name="Frankish A."/>
            <person name="Frankland J."/>
            <person name="French L."/>
            <person name="Garner P."/>
            <person name="Garnett J."/>
            <person name="Ghori M.J."/>
            <person name="Gilby L.M."/>
            <person name="Gillson C.J."/>
            <person name="Glithero R.J."/>
            <person name="Grafham D.V."/>
            <person name="Grant M."/>
            <person name="Gribble S."/>
            <person name="Griffiths C."/>
            <person name="Griffiths M.N.D."/>
            <person name="Hall R."/>
            <person name="Halls K.S."/>
            <person name="Hammond S."/>
            <person name="Harley J.L."/>
            <person name="Hart E.A."/>
            <person name="Heath P.D."/>
            <person name="Heathcott R."/>
            <person name="Holmes S.J."/>
            <person name="Howden P.J."/>
            <person name="Howe K.L."/>
            <person name="Howell G.R."/>
            <person name="Huckle E."/>
            <person name="Humphray S.J."/>
            <person name="Humphries M.D."/>
            <person name="Hunt A.R."/>
            <person name="Johnson C.M."/>
            <person name="Joy A.A."/>
            <person name="Kay M."/>
            <person name="Keenan S.J."/>
            <person name="Kimberley A.M."/>
            <person name="King A."/>
            <person name="Laird G.K."/>
            <person name="Langford C."/>
            <person name="Lawlor S."/>
            <person name="Leongamornlert D.A."/>
            <person name="Leversha M."/>
            <person name="Lloyd C.R."/>
            <person name="Lloyd D.M."/>
            <person name="Loveland J.E."/>
            <person name="Lovell J."/>
            <person name="Martin S."/>
            <person name="Mashreghi-Mohammadi M."/>
            <person name="Maslen G.L."/>
            <person name="Matthews L."/>
            <person name="McCann O.T."/>
            <person name="McLaren S.J."/>
            <person name="McLay K."/>
            <person name="McMurray A."/>
            <person name="Moore M.J.F."/>
            <person name="Mullikin J.C."/>
            <person name="Niblett D."/>
            <person name="Nickerson T."/>
            <person name="Novik K.L."/>
            <person name="Oliver K."/>
            <person name="Overton-Larty E.K."/>
            <person name="Parker A."/>
            <person name="Patel R."/>
            <person name="Pearce A.V."/>
            <person name="Peck A.I."/>
            <person name="Phillimore B.J.C.T."/>
            <person name="Phillips S."/>
            <person name="Plumb R.W."/>
            <person name="Porter K.M."/>
            <person name="Ramsey Y."/>
            <person name="Ranby S.A."/>
            <person name="Rice C.M."/>
            <person name="Ross M.T."/>
            <person name="Searle S.M."/>
            <person name="Sehra H.K."/>
            <person name="Sheridan E."/>
            <person name="Skuce C.D."/>
            <person name="Smith S."/>
            <person name="Smith M."/>
            <person name="Spraggon L."/>
            <person name="Squares S.L."/>
            <person name="Steward C.A."/>
            <person name="Sycamore N."/>
            <person name="Tamlyn-Hall G."/>
            <person name="Tester J."/>
            <person name="Theaker A.J."/>
            <person name="Thomas D.W."/>
            <person name="Thorpe A."/>
            <person name="Tracey A."/>
            <person name="Tromans A."/>
            <person name="Tubby B."/>
            <person name="Wall M."/>
            <person name="Wallis J.M."/>
            <person name="West A.P."/>
            <person name="White S.S."/>
            <person name="Whitehead S.L."/>
            <person name="Whittaker H."/>
            <person name="Wild A."/>
            <person name="Willey D.J."/>
            <person name="Wilmer T.E."/>
            <person name="Wood J.M."/>
            <person name="Wray P.W."/>
            <person name="Wyatt J.C."/>
            <person name="Young L."/>
            <person name="Younger R.M."/>
            <person name="Bentley D.R."/>
            <person name="Coulson A."/>
            <person name="Durbin R.M."/>
            <person name="Hubbard T."/>
            <person name="Sulston J.E."/>
            <person name="Dunham I."/>
            <person name="Rogers J."/>
            <person name="Beck S."/>
        </authorList>
    </citation>
    <scope>NUCLEOTIDE SEQUENCE [LARGE SCALE GENOMIC DNA]</scope>
</reference>
<reference key="4">
    <citation type="journal article" date="2004" name="Genome Res.">
        <title>The status, quality, and expansion of the NIH full-length cDNA project: the Mammalian Gene Collection (MGC).</title>
        <authorList>
            <consortium name="The MGC Project Team"/>
        </authorList>
    </citation>
    <scope>NUCLEOTIDE SEQUENCE [LARGE SCALE MRNA]</scope>
    <source>
        <tissue>Lung</tissue>
    </source>
</reference>
<reference key="5">
    <citation type="submission" date="2002-03" db="EMBL/GenBank/DDBJ databases">
        <title>cDNA clones of human proteins involved in signal transduction sequenced by the Guthrie cDNA resource center (www.cdna.org).</title>
        <authorList>
            <person name="Puhl H.L. III"/>
            <person name="Ikeda S.R."/>
            <person name="Aronstam R.S."/>
        </authorList>
    </citation>
    <scope>NUCLEOTIDE SEQUENCE [LARGE SCALE MRNA] OF 61-210</scope>
    <source>
        <tissue>Brain</tissue>
    </source>
</reference>
<reference key="6">
    <citation type="journal article" date="2004" name="J. Biol. Chem.">
        <title>RGS17/RGSZ2, a novel regulator of Gi/o, Gz, and Gq signaling.</title>
        <authorList>
            <person name="Mao H."/>
            <person name="Zhao Q."/>
            <person name="Daigle M."/>
            <person name="Ghahremani M.H."/>
            <person name="Chidiac P."/>
            <person name="Albert P.R."/>
        </authorList>
    </citation>
    <scope>FUNCTION</scope>
    <scope>TISSUE SPECIFICITY</scope>
</reference>
<reference key="7">
    <citation type="journal article" date="2008" name="Proc. Natl. Acad. Sci. U.S.A.">
        <title>Structural diversity in the RGS domain and its interaction with heterotrimeric G protein alpha-subunits.</title>
        <authorList>
            <person name="Soundararajan M."/>
            <person name="Willard F.S."/>
            <person name="Kimple A.J."/>
            <person name="Turnbull A.P."/>
            <person name="Ball L.J."/>
            <person name="Schoch G.A."/>
            <person name="Gileadi C."/>
            <person name="Fedorov O.Y."/>
            <person name="Dowler E.F."/>
            <person name="Higman V.A."/>
            <person name="Hutsell S.Q."/>
            <person name="Sundstroem M."/>
            <person name="Doyle D.A."/>
            <person name="Siderovski D.P."/>
        </authorList>
    </citation>
    <scope>X-RAY CRYSTALLOGRAPHY (2.40 ANGSTROMS) OF 72-206</scope>
    <scope>INTERACTION WITH GNAI1 AND GNAQ</scope>
</reference>
<sequence>MRKRQQSQNEGTPAVSQAPGNQRPNNTCCFCWCCCCSCSCLTVRNEERGENAGRPTHTTKMESIQVLEECQNPTAEEVLSWSQNFDKMMKAPAGRNLFREFLRTEYSEENLLFWLACEDLKKEQNKKVIEEKARMIYEDYISILSPKEVSLDSRVREVINRNLLDPNPHMYEDAQLQIYTLMHRDSFPRFLNSQIYKSFVESTAGSSSES</sequence>
<proteinExistence type="evidence at protein level"/>
<gene>
    <name type="primary">RGS17</name>
    <name evidence="6" type="synonym">RGSZ2</name>
</gene>
<accession>Q9UGC6</accession>
<accession>Q5TF49</accession>
<accession>Q8TD61</accession>
<accession>Q9UJS8</accession>
<comment type="function">
    <text evidence="1 4">Regulates G protein-coupled receptor signaling cascades, including signaling via muscarinic acetylcholine receptor CHRM2 and dopamine receptor DRD2. Inhibits signal transduction by increasing the GTPase activity of G protein alpha subunits, thereby driving them into their inactive GDP-bound form (PubMed:15096504). Binds selectively to GNAZ and GNAI2 subunits, accelerates their GTPase activity and regulates their signaling activities. Negatively regulates mu-opioid receptor-mediated activation of the G-proteins (By similarity).</text>
</comment>
<comment type="subunit">
    <text evidence="1 5">Interacts with GNAI1 and GNAQ (PubMed:18434541). Interacts with GNAZ and GNAI2. Interacts with OPRM1. Forms a complex with mu-opioid receptors and G(alpha)z/i2 subunits, including GNAZ and GNAI2; the formation of this complex results in mu-opioid receptor desensitization (By similarity). Interacts with HINT1 (By similarity).</text>
</comment>
<comment type="interaction">
    <interactant intactId="EBI-3918154">
        <id>Q9UGC6</id>
    </interactant>
    <interactant intactId="EBI-745213">
        <id>P29972</id>
        <label>AQP1</label>
    </interactant>
    <organismsDiffer>false</organismsDiffer>
    <experiments>6</experiments>
</comment>
<comment type="interaction">
    <interactant intactId="EBI-3918154">
        <id>Q9UGC6</id>
    </interactant>
    <interactant intactId="EBI-12006120">
        <id>A0A087WZT3</id>
        <label>BOLA2-SMG1P6</label>
    </interactant>
    <organismsDiffer>false</organismsDiffer>
    <experiments>3</experiments>
</comment>
<comment type="interaction">
    <interactant intactId="EBI-3918154">
        <id>Q9UGC6</id>
    </interactant>
    <interactant intactId="EBI-947551">
        <id>Q9H2X0</id>
        <label>CHRD</label>
    </interactant>
    <organismsDiffer>false</organismsDiffer>
    <experiments>3</experiments>
</comment>
<comment type="interaction">
    <interactant intactId="EBI-3918154">
        <id>Q9UGC6</id>
    </interactant>
    <interactant intactId="EBI-713677">
        <id>Q9UGL9</id>
        <label>CRCT1</label>
    </interactant>
    <organismsDiffer>false</organismsDiffer>
    <experiments>3</experiments>
</comment>
<comment type="interaction">
    <interactant intactId="EBI-3918154">
        <id>Q9UGC6</id>
    </interactant>
    <interactant intactId="EBI-10192698">
        <id>Q02930-3</id>
        <label>CREB5</label>
    </interactant>
    <organismsDiffer>false</organismsDiffer>
    <experiments>3</experiments>
</comment>
<comment type="interaction">
    <interactant intactId="EBI-3918154">
        <id>Q9UGC6</id>
    </interactant>
    <interactant intactId="EBI-10976677">
        <id>G5E9A7</id>
        <label>DMWD</label>
    </interactant>
    <organismsDiffer>false</organismsDiffer>
    <experiments>3</experiments>
</comment>
<comment type="interaction">
    <interactant intactId="EBI-3918154">
        <id>Q9UGC6</id>
    </interactant>
    <interactant intactId="EBI-1955541">
        <id>Q53GS7</id>
        <label>GLE1</label>
    </interactant>
    <organismsDiffer>false</organismsDiffer>
    <experiments>3</experiments>
</comment>
<comment type="interaction">
    <interactant intactId="EBI-3918154">
        <id>Q9UGC6</id>
    </interactant>
    <interactant intactId="EBI-618639">
        <id>P63096</id>
        <label>GNAI1</label>
    </interactant>
    <organismsDiffer>false</organismsDiffer>
    <experiments>3</experiments>
</comment>
<comment type="interaction">
    <interactant intactId="EBI-3918154">
        <id>Q9UGC6</id>
    </interactant>
    <interactant intactId="EBI-357563">
        <id>P08754</id>
        <label>GNAI3</label>
    </interactant>
    <organismsDiffer>false</organismsDiffer>
    <experiments>3</experiments>
</comment>
<comment type="interaction">
    <interactant intactId="EBI-3918154">
        <id>Q9UGC6</id>
    </interactant>
    <interactant intactId="EBI-740785">
        <id>P49639</id>
        <label>HOXA1</label>
    </interactant>
    <organismsDiffer>false</organismsDiffer>
    <experiments>6</experiments>
</comment>
<comment type="interaction">
    <interactant intactId="EBI-3918154">
        <id>Q9UGC6</id>
    </interactant>
    <interactant intactId="EBI-3918847">
        <id>Q9H2F3</id>
        <label>HSD3B7</label>
    </interactant>
    <organismsDiffer>false</organismsDiffer>
    <experiments>3</experiments>
</comment>
<comment type="interaction">
    <interactant intactId="EBI-3918154">
        <id>Q9UGC6</id>
    </interactant>
    <interactant intactId="EBI-948266">
        <id>O14901</id>
        <label>KLF11</label>
    </interactant>
    <organismsDiffer>false</organismsDiffer>
    <experiments>3</experiments>
</comment>
<comment type="interaction">
    <interactant intactId="EBI-3918154">
        <id>Q9UGC6</id>
    </interactant>
    <interactant intactId="EBI-10302392">
        <id>Q9BYQ6</id>
        <label>KRTAP4-11</label>
    </interactant>
    <organismsDiffer>false</organismsDiffer>
    <experiments>3</experiments>
</comment>
<comment type="interaction">
    <interactant intactId="EBI-3918154">
        <id>Q9UGC6</id>
    </interactant>
    <interactant intactId="EBI-11993296">
        <id>Q6L8G4</id>
        <label>KRTAP5-11</label>
    </interactant>
    <organismsDiffer>false</organismsDiffer>
    <experiments>5</experiments>
</comment>
<comment type="interaction">
    <interactant intactId="EBI-3918154">
        <id>Q9UGC6</id>
    </interactant>
    <interactant intactId="EBI-11974251">
        <id>Q6L8H2</id>
        <label>KRTAP5-3</label>
    </interactant>
    <organismsDiffer>false</organismsDiffer>
    <experiments>3</experiments>
</comment>
<comment type="interaction">
    <interactant intactId="EBI-3918154">
        <id>Q9UGC6</id>
    </interactant>
    <interactant intactId="EBI-11963072">
        <id>Q6L8H1</id>
        <label>KRTAP5-4</label>
    </interactant>
    <organismsDiffer>false</organismsDiffer>
    <experiments>3</experiments>
</comment>
<comment type="interaction">
    <interactant intactId="EBI-3918154">
        <id>Q9UGC6</id>
    </interactant>
    <interactant intactId="EBI-10250562">
        <id>Q6L8G9</id>
        <label>KRTAP5-6</label>
    </interactant>
    <organismsDiffer>false</organismsDiffer>
    <experiments>3</experiments>
</comment>
<comment type="interaction">
    <interactant intactId="EBI-3918154">
        <id>Q9UGC6</id>
    </interactant>
    <interactant intactId="EBI-11962058">
        <id>Q5T7P2</id>
        <label>LCE1A</label>
    </interactant>
    <organismsDiffer>false</organismsDiffer>
    <experiments>3</experiments>
</comment>
<comment type="interaction">
    <interactant intactId="EBI-3918154">
        <id>Q9UGC6</id>
    </interactant>
    <interactant intactId="EBI-10245913">
        <id>Q5T7P3</id>
        <label>LCE1B</label>
    </interactant>
    <organismsDiffer>false</organismsDiffer>
    <experiments>3</experiments>
</comment>
<comment type="interaction">
    <interactant intactId="EBI-3918154">
        <id>Q9UGC6</id>
    </interactant>
    <interactant intactId="EBI-11741311">
        <id>Q5T752</id>
        <label>LCE1D</label>
    </interactant>
    <organismsDiffer>false</organismsDiffer>
    <experiments>5</experiments>
</comment>
<comment type="interaction">
    <interactant intactId="EBI-3918154">
        <id>Q9UGC6</id>
    </interactant>
    <interactant intactId="EBI-11955335">
        <id>Q5T753</id>
        <label>LCE1E</label>
    </interactant>
    <organismsDiffer>false</organismsDiffer>
    <experiments>3</experiments>
</comment>
<comment type="interaction">
    <interactant intactId="EBI-3918154">
        <id>Q9UGC6</id>
    </interactant>
    <interactant intactId="EBI-10246607">
        <id>Q5TA79</id>
        <label>LCE2A</label>
    </interactant>
    <organismsDiffer>false</organismsDiffer>
    <experiments>3</experiments>
</comment>
<comment type="interaction">
    <interactant intactId="EBI-3918154">
        <id>Q9UGC6</id>
    </interactant>
    <interactant intactId="EBI-11478468">
        <id>O14633</id>
        <label>LCE2B</label>
    </interactant>
    <organismsDiffer>false</organismsDiffer>
    <experiments>3</experiments>
</comment>
<comment type="interaction">
    <interactant intactId="EBI-3918154">
        <id>Q9UGC6</id>
    </interactant>
    <interactant intactId="EBI-11973993">
        <id>Q5TA81</id>
        <label>LCE2C</label>
    </interactant>
    <organismsDiffer>false</organismsDiffer>
    <experiments>3</experiments>
</comment>
<comment type="interaction">
    <interactant intactId="EBI-3918154">
        <id>Q9UGC6</id>
    </interactant>
    <interactant intactId="EBI-9394625">
        <id>Q5TA76</id>
        <label>LCE3A</label>
    </interactant>
    <organismsDiffer>false</organismsDiffer>
    <experiments>3</experiments>
</comment>
<comment type="interaction">
    <interactant intactId="EBI-3918154">
        <id>Q9UGC6</id>
    </interactant>
    <interactant intactId="EBI-11974495">
        <id>Q5TA77</id>
        <label>LCE3B</label>
    </interactant>
    <organismsDiffer>false</organismsDiffer>
    <experiments>5</experiments>
</comment>
<comment type="interaction">
    <interactant intactId="EBI-3918154">
        <id>Q9UGC6</id>
    </interactant>
    <interactant intactId="EBI-10245291">
        <id>Q5T5A8</id>
        <label>LCE3C</label>
    </interactant>
    <organismsDiffer>false</organismsDiffer>
    <experiments>3</experiments>
</comment>
<comment type="interaction">
    <interactant intactId="EBI-3918154">
        <id>Q9UGC6</id>
    </interactant>
    <interactant intactId="EBI-6658837">
        <id>Q9BYE3</id>
        <label>LCE3D</label>
    </interactant>
    <organismsDiffer>false</organismsDiffer>
    <experiments>3</experiments>
</comment>
<comment type="interaction">
    <interactant intactId="EBI-3918154">
        <id>Q9UGC6</id>
    </interactant>
    <interactant intactId="EBI-10245456">
        <id>Q5T5B0</id>
        <label>LCE3E</label>
    </interactant>
    <organismsDiffer>false</organismsDiffer>
    <experiments>3</experiments>
</comment>
<comment type="interaction">
    <interactant intactId="EBI-3918154">
        <id>Q9UGC6</id>
    </interactant>
    <interactant intactId="EBI-10246358">
        <id>Q5TA78</id>
        <label>LCE4A</label>
    </interactant>
    <organismsDiffer>false</organismsDiffer>
    <experiments>3</experiments>
</comment>
<comment type="interaction">
    <interactant intactId="EBI-3918154">
        <id>Q9UGC6</id>
    </interactant>
    <interactant intactId="EBI-11955689">
        <id>Q5TCM9</id>
        <label>LCE5A</label>
    </interactant>
    <organismsDiffer>false</organismsDiffer>
    <experiments>5</experiments>
</comment>
<comment type="interaction">
    <interactant intactId="EBI-3918154">
        <id>Q9UGC6</id>
    </interactant>
    <interactant intactId="EBI-1210753">
        <id>Q7Z417</id>
        <label>NUFIP2</label>
    </interactant>
    <organismsDiffer>false</organismsDiffer>
    <experiments>3</experiments>
</comment>
<comment type="interaction">
    <interactant intactId="EBI-3918154">
        <id>Q9UGC6</id>
    </interactant>
    <interactant intactId="EBI-740446">
        <id>P32242</id>
        <label>OTX1</label>
    </interactant>
    <organismsDiffer>false</organismsDiffer>
    <experiments>6</experiments>
</comment>
<comment type="interaction">
    <interactant intactId="EBI-3918154">
        <id>Q9UGC6</id>
    </interactant>
    <interactant intactId="EBI-10234038">
        <id>P43115-12</id>
        <label>PTGER3</label>
    </interactant>
    <organismsDiffer>false</organismsDiffer>
    <experiments>3</experiments>
</comment>
<comment type="interaction">
    <interactant intactId="EBI-3918154">
        <id>Q9UGC6</id>
    </interactant>
    <interactant intactId="EBI-356860">
        <id>P62906</id>
        <label>RPL10A</label>
    </interactant>
    <organismsDiffer>false</organismsDiffer>
    <experiments>6</experiments>
</comment>
<comment type="interaction">
    <interactant intactId="EBI-3918154">
        <id>Q9UGC6</id>
    </interactant>
    <interactant intactId="EBI-1051105">
        <id>Q92504</id>
        <label>SLC39A7</label>
    </interactant>
    <organismsDiffer>false</organismsDiffer>
    <experiments>3</experiments>
</comment>
<comment type="interaction">
    <interactant intactId="EBI-3918154">
        <id>Q9UGC6</id>
    </interactant>
    <interactant intactId="EBI-750494">
        <id>P49901</id>
        <label>SMCP</label>
    </interactant>
    <organismsDiffer>false</organismsDiffer>
    <experiments>3</experiments>
</comment>
<comment type="interaction">
    <interactant intactId="EBI-3918154">
        <id>Q9UGC6</id>
    </interactant>
    <interactant intactId="EBI-5235340">
        <id>Q7Z699</id>
        <label>SPRED1</label>
    </interactant>
    <organismsDiffer>false</organismsDiffer>
    <experiments>3</experiments>
</comment>
<comment type="interaction">
    <interactant intactId="EBI-3918154">
        <id>Q9UGC6</id>
    </interactant>
    <interactant intactId="EBI-357085">
        <id>Q9UNE7</id>
        <label>STUB1</label>
    </interactant>
    <organismsDiffer>false</organismsDiffer>
    <experiments>3</experiments>
</comment>
<comment type="interaction">
    <interactant intactId="EBI-3918154">
        <id>Q9UGC6</id>
    </interactant>
    <interactant intactId="EBI-10249550">
        <id>Q6EMK4</id>
        <label>VASN</label>
    </interactant>
    <organismsDiffer>false</organismsDiffer>
    <experiments>3</experiments>
</comment>
<comment type="interaction">
    <interactant intactId="EBI-3918154">
        <id>Q9UGC6</id>
    </interactant>
    <interactant intactId="EBI-10315054">
        <id>Q9NWL9</id>
    </interactant>
    <organismsDiffer>false</organismsDiffer>
    <experiments>3</experiments>
</comment>
<comment type="subcellular location">
    <subcellularLocation>
        <location evidence="1">Membrane</location>
    </subcellularLocation>
    <subcellularLocation>
        <location evidence="1">Synapse</location>
        <location evidence="1">Synaptosome</location>
    </subcellularLocation>
    <subcellularLocation>
        <location evidence="1">Nucleus</location>
    </subcellularLocation>
    <subcellularLocation>
        <location evidence="1">Cytoplasm</location>
    </subcellularLocation>
</comment>
<comment type="tissue specificity">
    <text evidence="4">Predominantly expressed in the cerebellum. Also expressed in the cortex and medulla. Weakly expressed in a number of peripheral tissues notably spleen, lung and leukocytes.</text>
</comment>
<comment type="PTM">
    <text evidence="1">N- and O-glycosylated in synapsomal membranes.</text>
</comment>
<comment type="PTM">
    <text evidence="1">Serine phosphorylated in synapsomal membranes.</text>
</comment>
<comment type="PTM">
    <text evidence="1">Sumoylated with SUMO1 and SUM02 in synaptosomes. The sumoylated forms act as a scaffold for sequestering mu-opioid receptor-activated G(alpha) subunits (By similarity). Desumoylated by HINT1 (By similarity).</text>
</comment>
<comment type="online information" name="Atlas of Genetics and Cytogenetics in Oncology and Haematology">
    <link uri="https://atlasgeneticsoncology.org/gene/47522/RGS17"/>
</comment>
<name>RGS17_HUMAN</name>
<protein>
    <recommendedName>
        <fullName>Regulator of G-protein signaling 17</fullName>
        <shortName>RGS17</shortName>
    </recommendedName>
</protein>
<evidence type="ECO:0000250" key="1">
    <source>
        <dbReference type="UniProtKB" id="Q9QZB0"/>
    </source>
</evidence>
<evidence type="ECO:0000255" key="2">
    <source>
        <dbReference type="PROSITE-ProRule" id="PRU00171"/>
    </source>
</evidence>
<evidence type="ECO:0000256" key="3">
    <source>
        <dbReference type="SAM" id="MobiDB-lite"/>
    </source>
</evidence>
<evidence type="ECO:0000269" key="4">
    <source>
    </source>
</evidence>
<evidence type="ECO:0000269" key="5">
    <source>
    </source>
</evidence>
<evidence type="ECO:0000303" key="6">
    <source>
    </source>
</evidence>
<evidence type="ECO:0007829" key="7">
    <source>
        <dbReference type="PDB" id="6AM3"/>
    </source>
</evidence>
<organism>
    <name type="scientific">Homo sapiens</name>
    <name type="common">Human</name>
    <dbReference type="NCBI Taxonomy" id="9606"/>
    <lineage>
        <taxon>Eukaryota</taxon>
        <taxon>Metazoa</taxon>
        <taxon>Chordata</taxon>
        <taxon>Craniata</taxon>
        <taxon>Vertebrata</taxon>
        <taxon>Euteleostomi</taxon>
        <taxon>Mammalia</taxon>
        <taxon>Eutheria</taxon>
        <taxon>Euarchontoglires</taxon>
        <taxon>Primates</taxon>
        <taxon>Haplorrhini</taxon>
        <taxon>Catarrhini</taxon>
        <taxon>Hominidae</taxon>
        <taxon>Homo</taxon>
    </lineage>
</organism>
<feature type="chain" id="PRO_0000204224" description="Regulator of G-protein signaling 17">
    <location>
        <begin position="1"/>
        <end position="210"/>
    </location>
</feature>
<feature type="domain" description="RGS" evidence="2">
    <location>
        <begin position="84"/>
        <end position="200"/>
    </location>
</feature>
<feature type="region of interest" description="Disordered" evidence="3">
    <location>
        <begin position="1"/>
        <end position="21"/>
    </location>
</feature>
<feature type="modified residue" description="Phosphotyrosine" evidence="1">
    <location>
        <position position="137"/>
    </location>
</feature>
<feature type="helix" evidence="7">
    <location>
        <begin position="75"/>
        <end position="80"/>
    </location>
</feature>
<feature type="helix" evidence="7">
    <location>
        <begin position="81"/>
        <end position="83"/>
    </location>
</feature>
<feature type="helix" evidence="7">
    <location>
        <begin position="85"/>
        <end position="90"/>
    </location>
</feature>
<feature type="helix" evidence="7">
    <location>
        <begin position="92"/>
        <end position="104"/>
    </location>
</feature>
<feature type="helix" evidence="7">
    <location>
        <begin position="109"/>
        <end position="120"/>
    </location>
</feature>
<feature type="helix" evidence="7">
    <location>
        <begin position="126"/>
        <end position="140"/>
    </location>
</feature>
<feature type="helix" evidence="7">
    <location>
        <begin position="153"/>
        <end position="163"/>
    </location>
</feature>
<feature type="turn" evidence="7">
    <location>
        <begin position="168"/>
        <end position="171"/>
    </location>
</feature>
<feature type="helix" evidence="7">
    <location>
        <begin position="172"/>
        <end position="184"/>
    </location>
</feature>
<feature type="helix" evidence="7">
    <location>
        <begin position="186"/>
        <end position="191"/>
    </location>
</feature>
<feature type="helix" evidence="7">
    <location>
        <begin position="194"/>
        <end position="203"/>
    </location>
</feature>